<evidence type="ECO:0000250" key="1"/>
<evidence type="ECO:0000305" key="2"/>
<dbReference type="EC" id="1.10.3.2"/>
<dbReference type="EMBL" id="AP008211">
    <property type="protein sequence ID" value="BAF17658.1"/>
    <property type="status" value="ALT_SEQ"/>
    <property type="molecule type" value="Genomic_DNA"/>
</dbReference>
<dbReference type="EMBL" id="AP014961">
    <property type="status" value="NOT_ANNOTATED_CDS"/>
    <property type="molecule type" value="Genomic_DNA"/>
</dbReference>
<dbReference type="EMBL" id="CM000142">
    <property type="protein sequence ID" value="EAZ34561.1"/>
    <property type="molecule type" value="Genomic_DNA"/>
</dbReference>
<dbReference type="SMR" id="Q0DHL5"/>
<dbReference type="STRING" id="39947.Q0DHL5"/>
<dbReference type="PaxDb" id="39947-Q0DHL5"/>
<dbReference type="KEGG" id="dosa:Os05g0458300"/>
<dbReference type="eggNOG" id="KOG1263">
    <property type="taxonomic scope" value="Eukaryota"/>
</dbReference>
<dbReference type="HOGENOM" id="CLU_006504_6_3_1"/>
<dbReference type="InParanoid" id="Q0DHL5"/>
<dbReference type="Proteomes" id="UP000000763">
    <property type="component" value="Chromosome 5"/>
</dbReference>
<dbReference type="Proteomes" id="UP000007752">
    <property type="component" value="Chromosome 5"/>
</dbReference>
<dbReference type="Proteomes" id="UP000059680">
    <property type="component" value="Chromosome 5"/>
</dbReference>
<dbReference type="GO" id="GO:0048046">
    <property type="term" value="C:apoplast"/>
    <property type="evidence" value="ECO:0007669"/>
    <property type="project" value="UniProtKB-SubCell"/>
</dbReference>
<dbReference type="GO" id="GO:0005507">
    <property type="term" value="F:copper ion binding"/>
    <property type="evidence" value="ECO:0007669"/>
    <property type="project" value="InterPro"/>
</dbReference>
<dbReference type="GO" id="GO:0052716">
    <property type="term" value="F:hydroquinone:oxygen oxidoreductase activity"/>
    <property type="evidence" value="ECO:0007669"/>
    <property type="project" value="UniProtKB-EC"/>
</dbReference>
<dbReference type="GO" id="GO:0016491">
    <property type="term" value="F:oxidoreductase activity"/>
    <property type="evidence" value="ECO:0000318"/>
    <property type="project" value="GO_Central"/>
</dbReference>
<dbReference type="GO" id="GO:0046274">
    <property type="term" value="P:lignin catabolic process"/>
    <property type="evidence" value="ECO:0007669"/>
    <property type="project" value="UniProtKB-KW"/>
</dbReference>
<dbReference type="CDD" id="cd13849">
    <property type="entry name" value="CuRO_1_LCC_plant"/>
    <property type="match status" value="1"/>
</dbReference>
<dbReference type="CDD" id="cd13875">
    <property type="entry name" value="CuRO_2_LCC_plant"/>
    <property type="match status" value="1"/>
</dbReference>
<dbReference type="CDD" id="cd13897">
    <property type="entry name" value="CuRO_3_LCC_plant"/>
    <property type="match status" value="1"/>
</dbReference>
<dbReference type="FunFam" id="2.60.40.420:FF:000049">
    <property type="entry name" value="Laccase"/>
    <property type="match status" value="1"/>
</dbReference>
<dbReference type="FunFam" id="2.60.40.420:FF:000062">
    <property type="entry name" value="Laccase"/>
    <property type="match status" value="1"/>
</dbReference>
<dbReference type="Gene3D" id="2.60.40.420">
    <property type="entry name" value="Cupredoxins - blue copper proteins"/>
    <property type="match status" value="3"/>
</dbReference>
<dbReference type="InterPro" id="IPR011707">
    <property type="entry name" value="Cu-oxidase-like_N"/>
</dbReference>
<dbReference type="InterPro" id="IPR001117">
    <property type="entry name" value="Cu-oxidase_2nd"/>
</dbReference>
<dbReference type="InterPro" id="IPR011706">
    <property type="entry name" value="Cu-oxidase_C"/>
</dbReference>
<dbReference type="InterPro" id="IPR045087">
    <property type="entry name" value="Cu-oxidase_fam"/>
</dbReference>
<dbReference type="InterPro" id="IPR033138">
    <property type="entry name" value="Cu_oxidase_CS"/>
</dbReference>
<dbReference type="InterPro" id="IPR002355">
    <property type="entry name" value="Cu_oxidase_Cu_BS"/>
</dbReference>
<dbReference type="InterPro" id="IPR008972">
    <property type="entry name" value="Cupredoxin"/>
</dbReference>
<dbReference type="InterPro" id="IPR034288">
    <property type="entry name" value="CuRO_1_LCC"/>
</dbReference>
<dbReference type="InterPro" id="IPR034285">
    <property type="entry name" value="CuRO_2_LCC"/>
</dbReference>
<dbReference type="InterPro" id="IPR034289">
    <property type="entry name" value="CuRO_3_LCC"/>
</dbReference>
<dbReference type="InterPro" id="IPR017761">
    <property type="entry name" value="Laccase"/>
</dbReference>
<dbReference type="NCBIfam" id="TIGR03389">
    <property type="entry name" value="laccase"/>
    <property type="match status" value="1"/>
</dbReference>
<dbReference type="PANTHER" id="PTHR11709:SF67">
    <property type="entry name" value="LACCASE-11-RELATED"/>
    <property type="match status" value="1"/>
</dbReference>
<dbReference type="PANTHER" id="PTHR11709">
    <property type="entry name" value="MULTI-COPPER OXIDASE"/>
    <property type="match status" value="1"/>
</dbReference>
<dbReference type="Pfam" id="PF00394">
    <property type="entry name" value="Cu-oxidase"/>
    <property type="match status" value="1"/>
</dbReference>
<dbReference type="Pfam" id="PF07731">
    <property type="entry name" value="Cu-oxidase_2"/>
    <property type="match status" value="1"/>
</dbReference>
<dbReference type="Pfam" id="PF07732">
    <property type="entry name" value="Cu-oxidase_3"/>
    <property type="match status" value="1"/>
</dbReference>
<dbReference type="SUPFAM" id="SSF49503">
    <property type="entry name" value="Cupredoxins"/>
    <property type="match status" value="3"/>
</dbReference>
<dbReference type="PROSITE" id="PS00079">
    <property type="entry name" value="MULTICOPPER_OXIDASE1"/>
    <property type="match status" value="1"/>
</dbReference>
<dbReference type="PROSITE" id="PS00080">
    <property type="entry name" value="MULTICOPPER_OXIDASE2"/>
    <property type="match status" value="1"/>
</dbReference>
<comment type="function">
    <text evidence="1">Lignin degradation and detoxification of lignin-derived products.</text>
</comment>
<comment type="catalytic activity">
    <reaction>
        <text>4 hydroquinone + O2 = 4 benzosemiquinone + 2 H2O</text>
        <dbReference type="Rhea" id="RHEA:11276"/>
        <dbReference type="ChEBI" id="CHEBI:15377"/>
        <dbReference type="ChEBI" id="CHEBI:15379"/>
        <dbReference type="ChEBI" id="CHEBI:17594"/>
        <dbReference type="ChEBI" id="CHEBI:17977"/>
        <dbReference type="EC" id="1.10.3.2"/>
    </reaction>
</comment>
<comment type="cofactor">
    <cofactor evidence="1">
        <name>Cu cation</name>
        <dbReference type="ChEBI" id="CHEBI:23378"/>
    </cofactor>
    <text evidence="1">Binds 4 Cu cations per monomer.</text>
</comment>
<comment type="subcellular location">
    <subcellularLocation>
        <location evidence="2">Secreted</location>
        <location evidence="2">Extracellular space</location>
        <location evidence="2">Apoplast</location>
    </subcellularLocation>
</comment>
<comment type="similarity">
    <text evidence="2">Belongs to the multicopper oxidase family.</text>
</comment>
<comment type="caution">
    <text evidence="2">Lacks the signal peptide, which is one of the conserved features of the laccases.</text>
</comment>
<comment type="caution">
    <text evidence="2">Could be the product of a pseudogene.</text>
</comment>
<comment type="sequence caution" evidence="2">
    <conflict type="erroneous gene model prediction">
        <sequence resource="EMBL-CDS" id="BAF17658"/>
    </conflict>
</comment>
<name>LAC11_ORYSJ</name>
<protein>
    <recommendedName>
        <fullName>Putative laccase-11</fullName>
        <ecNumber>1.10.3.2</ecNumber>
    </recommendedName>
    <alternativeName>
        <fullName>Benzenediol:oxygen oxidoreductase 11</fullName>
    </alternativeName>
    <alternativeName>
        <fullName>Diphenol oxidase 11</fullName>
    </alternativeName>
    <alternativeName>
        <fullName>Urishiol oxidase 11</fullName>
    </alternativeName>
</protein>
<sequence>MATVTRLCVTKSVPTVNGQFPGPKLVVREGDTLVIRVTNNINNNVTFHWHGIRQVRSGWADGPAYITQCPIRSGGSYVYRFTVTGQRGTLWWHAHFSWLRATLYGPLVILPPRGVAYPFPKPHREVPLLLGEWFNADPEAVIKQALQTGGGPNVSDAYTFNGLPGPTYNCSSSNDTFKLRVRPGKTYLLRLINAALNDELFFGVANHTLMVVQADASYVKPFAATALVISPGQTMDVLLTAAANNPPSRSFAIAVAPYTNTVGTFDNTTAVAVLEYYGAATSAAALRSLPLPSLPAYNDTGAVANFSASFRSLASAQYPARVPRTVDRHFFFAVGLGADPCQSPVNGTCQGPNNTRFAASMNNVSFVMPRTSLLQAHYQRRYNGVLAANFPAAPRTPFNYTGTPPNNTFVTHGTRVVPLSFNTTVEVVLQDTSILGAESHPLHLHGYDFYVVGTGFGNYDASNDTAKYNLVDPVQRNTISVPTAGWVAIRFVADNPGVWIMHCHLDVHLSWGLSMAWLVNDGPLPNQKLPPPPSDIPMCS</sequence>
<reference key="1">
    <citation type="journal article" date="2005" name="Nature">
        <title>The map-based sequence of the rice genome.</title>
        <authorList>
            <consortium name="International rice genome sequencing project (IRGSP)"/>
        </authorList>
    </citation>
    <scope>NUCLEOTIDE SEQUENCE [LARGE SCALE GENOMIC DNA]</scope>
    <source>
        <strain>cv. Nipponbare</strain>
    </source>
</reference>
<reference key="2">
    <citation type="journal article" date="2008" name="Nucleic Acids Res.">
        <title>The rice annotation project database (RAP-DB): 2008 update.</title>
        <authorList>
            <consortium name="The rice annotation project (RAP)"/>
        </authorList>
    </citation>
    <scope>GENOME REANNOTATION</scope>
    <source>
        <strain>cv. Nipponbare</strain>
    </source>
</reference>
<reference key="3">
    <citation type="journal article" date="2013" name="Rice">
        <title>Improvement of the Oryza sativa Nipponbare reference genome using next generation sequence and optical map data.</title>
        <authorList>
            <person name="Kawahara Y."/>
            <person name="de la Bastide M."/>
            <person name="Hamilton J.P."/>
            <person name="Kanamori H."/>
            <person name="McCombie W.R."/>
            <person name="Ouyang S."/>
            <person name="Schwartz D.C."/>
            <person name="Tanaka T."/>
            <person name="Wu J."/>
            <person name="Zhou S."/>
            <person name="Childs K.L."/>
            <person name="Davidson R.M."/>
            <person name="Lin H."/>
            <person name="Quesada-Ocampo L."/>
            <person name="Vaillancourt B."/>
            <person name="Sakai H."/>
            <person name="Lee S.S."/>
            <person name="Kim J."/>
            <person name="Numa H."/>
            <person name="Itoh T."/>
            <person name="Buell C.R."/>
            <person name="Matsumoto T."/>
        </authorList>
    </citation>
    <scope>GENOME REANNOTATION</scope>
    <source>
        <strain>cv. Nipponbare</strain>
    </source>
</reference>
<reference key="4">
    <citation type="journal article" date="2005" name="PLoS Biol.">
        <title>The genomes of Oryza sativa: a history of duplications.</title>
        <authorList>
            <person name="Yu J."/>
            <person name="Wang J."/>
            <person name="Lin W."/>
            <person name="Li S."/>
            <person name="Li H."/>
            <person name="Zhou J."/>
            <person name="Ni P."/>
            <person name="Dong W."/>
            <person name="Hu S."/>
            <person name="Zeng C."/>
            <person name="Zhang J."/>
            <person name="Zhang Y."/>
            <person name="Li R."/>
            <person name="Xu Z."/>
            <person name="Li S."/>
            <person name="Li X."/>
            <person name="Zheng H."/>
            <person name="Cong L."/>
            <person name="Lin L."/>
            <person name="Yin J."/>
            <person name="Geng J."/>
            <person name="Li G."/>
            <person name="Shi J."/>
            <person name="Liu J."/>
            <person name="Lv H."/>
            <person name="Li J."/>
            <person name="Wang J."/>
            <person name="Deng Y."/>
            <person name="Ran L."/>
            <person name="Shi X."/>
            <person name="Wang X."/>
            <person name="Wu Q."/>
            <person name="Li C."/>
            <person name="Ren X."/>
            <person name="Wang J."/>
            <person name="Wang X."/>
            <person name="Li D."/>
            <person name="Liu D."/>
            <person name="Zhang X."/>
            <person name="Ji Z."/>
            <person name="Zhao W."/>
            <person name="Sun Y."/>
            <person name="Zhang Z."/>
            <person name="Bao J."/>
            <person name="Han Y."/>
            <person name="Dong L."/>
            <person name="Ji J."/>
            <person name="Chen P."/>
            <person name="Wu S."/>
            <person name="Liu J."/>
            <person name="Xiao Y."/>
            <person name="Bu D."/>
            <person name="Tan J."/>
            <person name="Yang L."/>
            <person name="Ye C."/>
            <person name="Zhang J."/>
            <person name="Xu J."/>
            <person name="Zhou Y."/>
            <person name="Yu Y."/>
            <person name="Zhang B."/>
            <person name="Zhuang S."/>
            <person name="Wei H."/>
            <person name="Liu B."/>
            <person name="Lei M."/>
            <person name="Yu H."/>
            <person name="Li Y."/>
            <person name="Xu H."/>
            <person name="Wei S."/>
            <person name="He X."/>
            <person name="Fang L."/>
            <person name="Zhang Z."/>
            <person name="Zhang Y."/>
            <person name="Huang X."/>
            <person name="Su Z."/>
            <person name="Tong W."/>
            <person name="Li J."/>
            <person name="Tong Z."/>
            <person name="Li S."/>
            <person name="Ye J."/>
            <person name="Wang L."/>
            <person name="Fang L."/>
            <person name="Lei T."/>
            <person name="Chen C.-S."/>
            <person name="Chen H.-C."/>
            <person name="Xu Z."/>
            <person name="Li H."/>
            <person name="Huang H."/>
            <person name="Zhang F."/>
            <person name="Xu H."/>
            <person name="Li N."/>
            <person name="Zhao C."/>
            <person name="Li S."/>
            <person name="Dong L."/>
            <person name="Huang Y."/>
            <person name="Li L."/>
            <person name="Xi Y."/>
            <person name="Qi Q."/>
            <person name="Li W."/>
            <person name="Zhang B."/>
            <person name="Hu W."/>
            <person name="Zhang Y."/>
            <person name="Tian X."/>
            <person name="Jiao Y."/>
            <person name="Liang X."/>
            <person name="Jin J."/>
            <person name="Gao L."/>
            <person name="Zheng W."/>
            <person name="Hao B."/>
            <person name="Liu S.-M."/>
            <person name="Wang W."/>
            <person name="Yuan L."/>
            <person name="Cao M."/>
            <person name="McDermott J."/>
            <person name="Samudrala R."/>
            <person name="Wang J."/>
            <person name="Wong G.K.-S."/>
            <person name="Yang H."/>
        </authorList>
    </citation>
    <scope>NUCLEOTIDE SEQUENCE [LARGE SCALE GENOMIC DNA]</scope>
    <source>
        <strain>cv. Nipponbare</strain>
    </source>
</reference>
<accession>Q0DHL5</accession>
<accession>A3B4S2</accession>
<keyword id="KW-0052">Apoplast</keyword>
<keyword id="KW-0186">Copper</keyword>
<keyword id="KW-0439">Lignin degradation</keyword>
<keyword id="KW-0479">Metal-binding</keyword>
<keyword id="KW-0560">Oxidoreductase</keyword>
<keyword id="KW-1185">Reference proteome</keyword>
<keyword id="KW-0677">Repeat</keyword>
<keyword id="KW-0964">Secreted</keyword>
<proteinExistence type="uncertain"/>
<organism>
    <name type="scientific">Oryza sativa subsp. japonica</name>
    <name type="common">Rice</name>
    <dbReference type="NCBI Taxonomy" id="39947"/>
    <lineage>
        <taxon>Eukaryota</taxon>
        <taxon>Viridiplantae</taxon>
        <taxon>Streptophyta</taxon>
        <taxon>Embryophyta</taxon>
        <taxon>Tracheophyta</taxon>
        <taxon>Spermatophyta</taxon>
        <taxon>Magnoliopsida</taxon>
        <taxon>Liliopsida</taxon>
        <taxon>Poales</taxon>
        <taxon>Poaceae</taxon>
        <taxon>BOP clade</taxon>
        <taxon>Oryzoideae</taxon>
        <taxon>Oryzeae</taxon>
        <taxon>Oryzinae</taxon>
        <taxon>Oryza</taxon>
        <taxon>Oryza sativa</taxon>
    </lineage>
</organism>
<gene>
    <name type="primary">LAC11</name>
    <name type="ordered locus">Os05g0458300</name>
    <name type="ordered locus">LOC_Os05g38390</name>
    <name type="ORF">OsJ_018044</name>
</gene>
<feature type="chain" id="PRO_0000291896" description="Putative laccase-11">
    <location>
        <begin position="1"/>
        <end position="540"/>
    </location>
</feature>
<feature type="domain" description="Plastocyanin-like 1">
    <location>
        <begin position="1"/>
        <end position="114"/>
    </location>
</feature>
<feature type="domain" description="Plastocyanin-like 2">
    <location>
        <begin position="124"/>
        <end position="279"/>
    </location>
</feature>
<feature type="domain" description="Plastocyanin-like 3">
    <location>
        <begin position="389"/>
        <end position="523"/>
    </location>
</feature>
<feature type="binding site" evidence="1">
    <location>
        <position position="48"/>
    </location>
    <ligand>
        <name>Cu cation</name>
        <dbReference type="ChEBI" id="CHEBI:23378"/>
        <label>1</label>
    </ligand>
</feature>
<feature type="binding site" evidence="1">
    <location>
        <position position="50"/>
    </location>
    <ligand>
        <name>Cu cation</name>
        <dbReference type="ChEBI" id="CHEBI:23378"/>
        <label>2</label>
    </ligand>
</feature>
<feature type="binding site" evidence="1">
    <location>
        <position position="93"/>
    </location>
    <ligand>
        <name>Cu cation</name>
        <dbReference type="ChEBI" id="CHEBI:23378"/>
        <label>2</label>
    </ligand>
</feature>
<feature type="binding site" evidence="1">
    <location>
        <position position="95"/>
    </location>
    <ligand>
        <name>Cu cation</name>
        <dbReference type="ChEBI" id="CHEBI:23378"/>
        <label>3</label>
    </ligand>
</feature>
<feature type="binding site" evidence="1">
    <location>
        <position position="440"/>
    </location>
    <ligand>
        <name>Cu cation</name>
        <dbReference type="ChEBI" id="CHEBI:23378"/>
        <label>4</label>
    </ligand>
</feature>
<feature type="binding site" evidence="1">
    <location>
        <position position="443"/>
    </location>
    <ligand>
        <name>Cu cation</name>
        <dbReference type="ChEBI" id="CHEBI:23378"/>
        <label>1</label>
    </ligand>
</feature>
<feature type="binding site" evidence="1">
    <location>
        <position position="445"/>
    </location>
    <ligand>
        <name>Cu cation</name>
        <dbReference type="ChEBI" id="CHEBI:23378"/>
        <label>3</label>
    </ligand>
</feature>
<feature type="binding site" evidence="1">
    <location>
        <position position="502"/>
    </location>
    <ligand>
        <name>Cu cation</name>
        <dbReference type="ChEBI" id="CHEBI:23378"/>
        <label>3</label>
    </ligand>
</feature>
<feature type="binding site" evidence="1">
    <location>
        <position position="503"/>
    </location>
    <ligand>
        <name>Cu cation</name>
        <dbReference type="ChEBI" id="CHEBI:23378"/>
        <label>4</label>
    </ligand>
</feature>
<feature type="binding site" evidence="1">
    <location>
        <position position="504"/>
    </location>
    <ligand>
        <name>Cu cation</name>
        <dbReference type="ChEBI" id="CHEBI:23378"/>
        <label>2</label>
    </ligand>
</feature>
<feature type="binding site" evidence="1">
    <location>
        <position position="508"/>
    </location>
    <ligand>
        <name>Cu cation</name>
        <dbReference type="ChEBI" id="CHEBI:23378"/>
        <label>4</label>
    </ligand>
</feature>